<dbReference type="EMBL" id="AL513382">
    <property type="protein sequence ID" value="CAD01165.1"/>
    <property type="molecule type" value="Genomic_DNA"/>
</dbReference>
<dbReference type="EMBL" id="AE014613">
    <property type="protein sequence ID" value="AAO67746.1"/>
    <property type="molecule type" value="Genomic_DNA"/>
</dbReference>
<dbReference type="RefSeq" id="NP_454622.1">
    <property type="nucleotide sequence ID" value="NC_003198.1"/>
</dbReference>
<dbReference type="RefSeq" id="WP_000516126.1">
    <property type="nucleotide sequence ID" value="NZ_WSUR01000014.1"/>
</dbReference>
<dbReference type="SMR" id="Q8Z9R1"/>
<dbReference type="STRING" id="220341.gene:17584067"/>
<dbReference type="GeneID" id="66754552"/>
<dbReference type="KEGG" id="stt:t0012"/>
<dbReference type="KEGG" id="sty:STY0012"/>
<dbReference type="PATRIC" id="fig|220341.7.peg.12"/>
<dbReference type="eggNOG" id="COG0443">
    <property type="taxonomic scope" value="Bacteria"/>
</dbReference>
<dbReference type="HOGENOM" id="CLU_005965_2_1_6"/>
<dbReference type="OMA" id="MGTDWKI"/>
<dbReference type="OrthoDB" id="9766019at2"/>
<dbReference type="Proteomes" id="UP000000541">
    <property type="component" value="Chromosome"/>
</dbReference>
<dbReference type="Proteomes" id="UP000002670">
    <property type="component" value="Chromosome"/>
</dbReference>
<dbReference type="GO" id="GO:0005524">
    <property type="term" value="F:ATP binding"/>
    <property type="evidence" value="ECO:0007669"/>
    <property type="project" value="UniProtKB-UniRule"/>
</dbReference>
<dbReference type="GO" id="GO:0140662">
    <property type="term" value="F:ATP-dependent protein folding chaperone"/>
    <property type="evidence" value="ECO:0007669"/>
    <property type="project" value="InterPro"/>
</dbReference>
<dbReference type="GO" id="GO:0051082">
    <property type="term" value="F:unfolded protein binding"/>
    <property type="evidence" value="ECO:0007669"/>
    <property type="project" value="InterPro"/>
</dbReference>
<dbReference type="GO" id="GO:0006260">
    <property type="term" value="P:DNA replication"/>
    <property type="evidence" value="ECO:0007669"/>
    <property type="project" value="UniProtKB-KW"/>
</dbReference>
<dbReference type="CDD" id="cd10234">
    <property type="entry name" value="ASKHA_NBD_HSP70_DnaK-like"/>
    <property type="match status" value="1"/>
</dbReference>
<dbReference type="FunFam" id="2.60.34.10:FF:000014">
    <property type="entry name" value="Chaperone protein DnaK HSP70"/>
    <property type="match status" value="1"/>
</dbReference>
<dbReference type="FunFam" id="1.20.1270.10:FF:000001">
    <property type="entry name" value="Molecular chaperone DnaK"/>
    <property type="match status" value="1"/>
</dbReference>
<dbReference type="FunFam" id="3.30.420.40:FF:000004">
    <property type="entry name" value="Molecular chaperone DnaK"/>
    <property type="match status" value="1"/>
</dbReference>
<dbReference type="FunFam" id="3.90.640.10:FF:000003">
    <property type="entry name" value="Molecular chaperone DnaK"/>
    <property type="match status" value="1"/>
</dbReference>
<dbReference type="Gene3D" id="1.20.1270.10">
    <property type="match status" value="1"/>
</dbReference>
<dbReference type="Gene3D" id="3.30.420.40">
    <property type="match status" value="2"/>
</dbReference>
<dbReference type="Gene3D" id="3.90.640.10">
    <property type="entry name" value="Actin, Chain A, domain 4"/>
    <property type="match status" value="1"/>
</dbReference>
<dbReference type="Gene3D" id="2.60.34.10">
    <property type="entry name" value="Substrate Binding Domain Of DNAk, Chain A, domain 1"/>
    <property type="match status" value="1"/>
</dbReference>
<dbReference type="HAMAP" id="MF_00332">
    <property type="entry name" value="DnaK"/>
    <property type="match status" value="1"/>
</dbReference>
<dbReference type="InterPro" id="IPR043129">
    <property type="entry name" value="ATPase_NBD"/>
</dbReference>
<dbReference type="InterPro" id="IPR012725">
    <property type="entry name" value="Chaperone_DnaK"/>
</dbReference>
<dbReference type="InterPro" id="IPR018181">
    <property type="entry name" value="Heat_shock_70_CS"/>
</dbReference>
<dbReference type="InterPro" id="IPR029048">
    <property type="entry name" value="HSP70_C_sf"/>
</dbReference>
<dbReference type="InterPro" id="IPR029047">
    <property type="entry name" value="HSP70_peptide-bd_sf"/>
</dbReference>
<dbReference type="InterPro" id="IPR013126">
    <property type="entry name" value="Hsp_70_fam"/>
</dbReference>
<dbReference type="NCBIfam" id="NF001413">
    <property type="entry name" value="PRK00290.1"/>
    <property type="match status" value="1"/>
</dbReference>
<dbReference type="NCBIfam" id="NF003520">
    <property type="entry name" value="PRK05183.1"/>
    <property type="match status" value="1"/>
</dbReference>
<dbReference type="NCBIfam" id="TIGR02350">
    <property type="entry name" value="prok_dnaK"/>
    <property type="match status" value="1"/>
</dbReference>
<dbReference type="PANTHER" id="PTHR19375">
    <property type="entry name" value="HEAT SHOCK PROTEIN 70KDA"/>
    <property type="match status" value="1"/>
</dbReference>
<dbReference type="Pfam" id="PF00012">
    <property type="entry name" value="HSP70"/>
    <property type="match status" value="1"/>
</dbReference>
<dbReference type="PRINTS" id="PR00301">
    <property type="entry name" value="HEATSHOCK70"/>
</dbReference>
<dbReference type="SUPFAM" id="SSF53067">
    <property type="entry name" value="Actin-like ATPase domain"/>
    <property type="match status" value="2"/>
</dbReference>
<dbReference type="SUPFAM" id="SSF100934">
    <property type="entry name" value="Heat shock protein 70kD (HSP70), C-terminal subdomain"/>
    <property type="match status" value="1"/>
</dbReference>
<dbReference type="SUPFAM" id="SSF100920">
    <property type="entry name" value="Heat shock protein 70kD (HSP70), peptide-binding domain"/>
    <property type="match status" value="1"/>
</dbReference>
<dbReference type="PROSITE" id="PS00297">
    <property type="entry name" value="HSP70_1"/>
    <property type="match status" value="1"/>
</dbReference>
<dbReference type="PROSITE" id="PS00329">
    <property type="entry name" value="HSP70_2"/>
    <property type="match status" value="1"/>
</dbReference>
<dbReference type="PROSITE" id="PS01036">
    <property type="entry name" value="HSP70_3"/>
    <property type="match status" value="1"/>
</dbReference>
<evidence type="ECO:0000250" key="1"/>
<evidence type="ECO:0000256" key="2">
    <source>
        <dbReference type="SAM" id="MobiDB-lite"/>
    </source>
</evidence>
<evidence type="ECO:0000305" key="3"/>
<organism>
    <name type="scientific">Salmonella typhi</name>
    <dbReference type="NCBI Taxonomy" id="90370"/>
    <lineage>
        <taxon>Bacteria</taxon>
        <taxon>Pseudomonadati</taxon>
        <taxon>Pseudomonadota</taxon>
        <taxon>Gammaproteobacteria</taxon>
        <taxon>Enterobacterales</taxon>
        <taxon>Enterobacteriaceae</taxon>
        <taxon>Salmonella</taxon>
    </lineage>
</organism>
<name>DNAK_SALTI</name>
<comment type="function">
    <text evidence="1">Acts as a chaperone.</text>
</comment>
<comment type="induction">
    <text evidence="1">By stress conditions e.g. heat shock (By similarity).</text>
</comment>
<comment type="PTM">
    <text evidence="1">Autophosphorylated; GrpE inhibits the autophosphorylation.</text>
</comment>
<comment type="similarity">
    <text evidence="3">Belongs to the heat shock protein 70 family.</text>
</comment>
<keyword id="KW-0067">ATP-binding</keyword>
<keyword id="KW-0143">Chaperone</keyword>
<keyword id="KW-0235">DNA replication</keyword>
<keyword id="KW-0547">Nucleotide-binding</keyword>
<keyword id="KW-0597">Phosphoprotein</keyword>
<keyword id="KW-0346">Stress response</keyword>
<feature type="initiator methionine" description="Removed" evidence="1">
    <location>
        <position position="1"/>
    </location>
</feature>
<feature type="chain" id="PRO_0000078532" description="Chaperone protein DnaK">
    <location>
        <begin position="2"/>
        <end position="638"/>
    </location>
</feature>
<feature type="region of interest" description="Disordered" evidence="2">
    <location>
        <begin position="603"/>
        <end position="638"/>
    </location>
</feature>
<feature type="compositionally biased region" description="Low complexity" evidence="2">
    <location>
        <begin position="603"/>
        <end position="620"/>
    </location>
</feature>
<feature type="modified residue" description="Phosphothreonine; by autocatalysis" evidence="1">
    <location>
        <position position="199"/>
    </location>
</feature>
<sequence>MGKIIGIDLGTTNSCVAIMDGTQARVLENAEGDRTTPSIIAYTQDGETLVGQPAKRQAVTNPQNTLFAIKRLIGRRFQDEEVQRDVSIMPYKIIGADNGDAWLDVKGQKMAPPQISAEVLKKMKKTAEDYLGEPVTEAVITVPAYFNDAQRQATKDAGRIAGLEVKRIINEPTAAALAYGLDKEVGNRTIAVYDLGGGTFDISIIEIDEVDGEKTFEVLATNGDTHLGGEDFDTRLINYLVDEFKKDQGIDLRNDPLAMQRLKEAAEKAKIELSSAQQTDVNLPYITADATGPKHMNIKVTRAKLESLVEDLVNRSIEPLKVALQDAGLSVSDINDVILVGGQTRMPMVQKKVAEFFGKEPRKDVNPDEAVAIGAAVQGGVLTGDVKDVLLLDVTPLSLGIETMGGVMTPLITKNTTIPTKHSQVFSTAEDNQSAVTIHVLQGERKRASDNKSLGQFNLDGINPAPRGMPQIEVTFDIDADGILHVSAKDKNSGKEQKITIKASSGLNEEEIQKMVRDAEANAESDRKFEELVQTRNQGDHLLHSTRKQVEEAGDKLPADDKTAIESALSALETALKGEDKAAIEAKMQELAQVSQKLMEIAQQQHAQQQAGSADASANNAKDDDVVDAEFEEVKDKK</sequence>
<gene>
    <name type="primary">dnaK</name>
    <name type="ordered locus">STY0012</name>
    <name type="ordered locus">t0012</name>
</gene>
<accession>Q8Z9R1</accession>
<reference key="1">
    <citation type="journal article" date="2001" name="Nature">
        <title>Complete genome sequence of a multiple drug resistant Salmonella enterica serovar Typhi CT18.</title>
        <authorList>
            <person name="Parkhill J."/>
            <person name="Dougan G."/>
            <person name="James K.D."/>
            <person name="Thomson N.R."/>
            <person name="Pickard D."/>
            <person name="Wain J."/>
            <person name="Churcher C.M."/>
            <person name="Mungall K.L."/>
            <person name="Bentley S.D."/>
            <person name="Holden M.T.G."/>
            <person name="Sebaihia M."/>
            <person name="Baker S."/>
            <person name="Basham D."/>
            <person name="Brooks K."/>
            <person name="Chillingworth T."/>
            <person name="Connerton P."/>
            <person name="Cronin A."/>
            <person name="Davis P."/>
            <person name="Davies R.M."/>
            <person name="Dowd L."/>
            <person name="White N."/>
            <person name="Farrar J."/>
            <person name="Feltwell T."/>
            <person name="Hamlin N."/>
            <person name="Haque A."/>
            <person name="Hien T.T."/>
            <person name="Holroyd S."/>
            <person name="Jagels K."/>
            <person name="Krogh A."/>
            <person name="Larsen T.S."/>
            <person name="Leather S."/>
            <person name="Moule S."/>
            <person name="O'Gaora P."/>
            <person name="Parry C."/>
            <person name="Quail M.A."/>
            <person name="Rutherford K.M."/>
            <person name="Simmonds M."/>
            <person name="Skelton J."/>
            <person name="Stevens K."/>
            <person name="Whitehead S."/>
            <person name="Barrell B.G."/>
        </authorList>
    </citation>
    <scope>NUCLEOTIDE SEQUENCE [LARGE SCALE GENOMIC DNA]</scope>
    <source>
        <strain>CT18</strain>
    </source>
</reference>
<reference key="2">
    <citation type="journal article" date="2003" name="J. Bacteriol.">
        <title>Comparative genomics of Salmonella enterica serovar Typhi strains Ty2 and CT18.</title>
        <authorList>
            <person name="Deng W."/>
            <person name="Liou S.-R."/>
            <person name="Plunkett G. III"/>
            <person name="Mayhew G.F."/>
            <person name="Rose D.J."/>
            <person name="Burland V."/>
            <person name="Kodoyianni V."/>
            <person name="Schwartz D.C."/>
            <person name="Blattner F.R."/>
        </authorList>
    </citation>
    <scope>NUCLEOTIDE SEQUENCE [LARGE SCALE GENOMIC DNA]</scope>
    <source>
        <strain>ATCC 700931 / Ty2</strain>
    </source>
</reference>
<proteinExistence type="inferred from homology"/>
<protein>
    <recommendedName>
        <fullName>Chaperone protein DnaK</fullName>
    </recommendedName>
    <alternativeName>
        <fullName>HSP70</fullName>
    </alternativeName>
    <alternativeName>
        <fullName>Heat shock 70 kDa protein</fullName>
    </alternativeName>
    <alternativeName>
        <fullName>Heat shock protein 70</fullName>
    </alternativeName>
</protein>